<evidence type="ECO:0000250" key="1">
    <source>
        <dbReference type="UniProtKB" id="A0A1S4AX27"/>
    </source>
</evidence>
<evidence type="ECO:0000256" key="2">
    <source>
        <dbReference type="SAM" id="MobiDB-lite"/>
    </source>
</evidence>
<evidence type="ECO:0000269" key="3">
    <source>
    </source>
</evidence>
<evidence type="ECO:0000269" key="4">
    <source>
    </source>
</evidence>
<evidence type="ECO:0000303" key="5">
    <source>
    </source>
</evidence>
<evidence type="ECO:0000303" key="6">
    <source>
    </source>
</evidence>
<evidence type="ECO:0000305" key="7"/>
<evidence type="ECO:0000312" key="8">
    <source>
        <dbReference type="Araport" id="AT1G79200"/>
    </source>
</evidence>
<evidence type="ECO:0000312" key="9">
    <source>
        <dbReference type="EMBL" id="AAC17063.1"/>
    </source>
</evidence>
<gene>
    <name evidence="5" type="primary">SCI1</name>
    <name evidence="8" type="ordered locus">At1g79200</name>
    <name evidence="9" type="ORF">YUP8H12R.41</name>
</gene>
<proteinExistence type="evidence at transcript level"/>
<name>SCI1_ARATH</name>
<sequence>MVSERSSKEKKRSRARSEDSSSSDYEEKVKRHRGTEKDDERRSRRSDKKDKKSHKHHKSSTSKKSKDDKPKKKHTESDHKLKEGIPELSMEDYFSKNNEFATWLKEEKRTYFNDLTTEAARGLFSRFVKRWNRGKLESRYYEGISTAPRTAHDWMIKRR</sequence>
<keyword id="KW-0927">Auxin signaling pathway</keyword>
<keyword id="KW-0131">Cell cycle</keyword>
<keyword id="KW-0132">Cell division</keyword>
<keyword id="KW-0217">Developmental protein</keyword>
<keyword id="KW-0539">Nucleus</keyword>
<keyword id="KW-1185">Reference proteome</keyword>
<dbReference type="EMBL" id="AC002986">
    <property type="protein sequence ID" value="AAC17063.1"/>
    <property type="status" value="ALT_SEQ"/>
    <property type="molecule type" value="Genomic_DNA"/>
</dbReference>
<dbReference type="EMBL" id="CP002684">
    <property type="protein sequence ID" value="AEE36214.1"/>
    <property type="molecule type" value="Genomic_DNA"/>
</dbReference>
<dbReference type="EMBL" id="AK118564">
    <property type="protein sequence ID" value="BAC43165.1"/>
    <property type="molecule type" value="mRNA"/>
</dbReference>
<dbReference type="EMBL" id="BT003682">
    <property type="protein sequence ID" value="AAO39910.1"/>
    <property type="molecule type" value="mRNA"/>
</dbReference>
<dbReference type="EMBL" id="AY086579">
    <property type="protein sequence ID" value="AAM63641.1"/>
    <property type="molecule type" value="mRNA"/>
</dbReference>
<dbReference type="PIR" id="T01037">
    <property type="entry name" value="T01037"/>
</dbReference>
<dbReference type="RefSeq" id="NP_565201.1">
    <property type="nucleotide sequence ID" value="NM_106571.5"/>
</dbReference>
<dbReference type="FunCoup" id="Q8GWY0">
    <property type="interactions" value="332"/>
</dbReference>
<dbReference type="STRING" id="3702.Q8GWY0"/>
<dbReference type="PaxDb" id="3702-AT1G79200.1"/>
<dbReference type="ProteomicsDB" id="232910"/>
<dbReference type="EnsemblPlants" id="AT1G79200.1">
    <property type="protein sequence ID" value="AT1G79200.1"/>
    <property type="gene ID" value="AT1G79200"/>
</dbReference>
<dbReference type="GeneID" id="844261"/>
<dbReference type="Gramene" id="AT1G79200.1">
    <property type="protein sequence ID" value="AT1G79200.1"/>
    <property type="gene ID" value="AT1G79200"/>
</dbReference>
<dbReference type="KEGG" id="ath:AT1G79200"/>
<dbReference type="Araport" id="AT1G79200"/>
<dbReference type="TAIR" id="AT1G79200">
    <property type="gene designation" value="SCI1"/>
</dbReference>
<dbReference type="eggNOG" id="ENOG502S2GY">
    <property type="taxonomic scope" value="Eukaryota"/>
</dbReference>
<dbReference type="HOGENOM" id="CLU_141912_0_0_1"/>
<dbReference type="InParanoid" id="Q8GWY0"/>
<dbReference type="OMA" id="DWNSQKL"/>
<dbReference type="OrthoDB" id="2139939at2759"/>
<dbReference type="PhylomeDB" id="Q8GWY0"/>
<dbReference type="PRO" id="PR:Q8GWY0"/>
<dbReference type="Proteomes" id="UP000006548">
    <property type="component" value="Chromosome 1"/>
</dbReference>
<dbReference type="ExpressionAtlas" id="Q8GWY0">
    <property type="expression patterns" value="baseline and differential"/>
</dbReference>
<dbReference type="GO" id="GO:0005634">
    <property type="term" value="C:nucleus"/>
    <property type="evidence" value="ECO:0000314"/>
    <property type="project" value="TAIR"/>
</dbReference>
<dbReference type="GO" id="GO:0009734">
    <property type="term" value="P:auxin-activated signaling pathway"/>
    <property type="evidence" value="ECO:0007669"/>
    <property type="project" value="UniProtKB-KW"/>
</dbReference>
<dbReference type="GO" id="GO:0051301">
    <property type="term" value="P:cell division"/>
    <property type="evidence" value="ECO:0007669"/>
    <property type="project" value="UniProtKB-KW"/>
</dbReference>
<dbReference type="GO" id="GO:0071365">
    <property type="term" value="P:cellular response to auxin stimulus"/>
    <property type="evidence" value="ECO:0000316"/>
    <property type="project" value="TAIR"/>
</dbReference>
<dbReference type="GO" id="GO:0048467">
    <property type="term" value="P:gynoecium development"/>
    <property type="evidence" value="ECO:0000315"/>
    <property type="project" value="TAIR"/>
</dbReference>
<dbReference type="GO" id="GO:0051782">
    <property type="term" value="P:negative regulation of cell division"/>
    <property type="evidence" value="ECO:0000250"/>
    <property type="project" value="UniProtKB"/>
</dbReference>
<dbReference type="GO" id="GO:0010928">
    <property type="term" value="P:regulation of auxin mediated signaling pathway"/>
    <property type="evidence" value="ECO:0000315"/>
    <property type="project" value="UniProtKB"/>
</dbReference>
<dbReference type="GO" id="GO:0048480">
    <property type="term" value="P:stigma development"/>
    <property type="evidence" value="ECO:0000315"/>
    <property type="project" value="UniProtKB"/>
</dbReference>
<dbReference type="GO" id="GO:0048479">
    <property type="term" value="P:style development"/>
    <property type="evidence" value="ECO:0000315"/>
    <property type="project" value="UniProtKB"/>
</dbReference>
<dbReference type="InterPro" id="IPR044688">
    <property type="entry name" value="SCI-1-like"/>
</dbReference>
<dbReference type="PANTHER" id="PTHR34117">
    <property type="entry name" value="STYLE CELL-CYCLE INHIBITOR 1"/>
    <property type="match status" value="1"/>
</dbReference>
<dbReference type="PANTHER" id="PTHR34117:SF1">
    <property type="entry name" value="STYLE CELL-CYCLE INHIBITOR 1"/>
    <property type="match status" value="1"/>
</dbReference>
<feature type="chain" id="PRO_0000444449" description="Style cell-cycle inhibitor 1">
    <location>
        <begin position="1"/>
        <end position="159"/>
    </location>
</feature>
<feature type="region of interest" description="Disordered" evidence="2">
    <location>
        <begin position="1"/>
        <end position="86"/>
    </location>
</feature>
<feature type="compositionally biased region" description="Basic and acidic residues" evidence="2">
    <location>
        <begin position="15"/>
        <end position="50"/>
    </location>
</feature>
<feature type="compositionally biased region" description="Basic residues" evidence="2">
    <location>
        <begin position="51"/>
        <end position="63"/>
    </location>
</feature>
<feature type="compositionally biased region" description="Basic and acidic residues" evidence="2">
    <location>
        <begin position="64"/>
        <end position="85"/>
    </location>
</feature>
<feature type="sequence conflict" description="In Ref. 5; AAM63641." evidence="7" ref="5">
    <original>V</original>
    <variation>G</variation>
    <location>
        <position position="2"/>
    </location>
</feature>
<feature type="sequence conflict" description="In Ref. 5; AAM63641." evidence="7" ref="5">
    <original>E</original>
    <variation>G</variation>
    <location>
        <position position="27"/>
    </location>
</feature>
<feature type="sequence conflict" description="In Ref. 5; AAM63641." evidence="7" ref="5">
    <original>G</original>
    <variation>R</variation>
    <location>
        <position position="143"/>
    </location>
</feature>
<feature type="sequence conflict" description="In Ref. 5; AAM63641." evidence="7" ref="5">
    <original>M</original>
    <variation>I</variation>
    <location>
        <position position="155"/>
    </location>
</feature>
<accession>Q8GWY0</accession>
<accession>O64533</accession>
<accession>Q8LCI9</accession>
<protein>
    <recommendedName>
        <fullName evidence="5">Style cell-cycle inhibitor 1</fullName>
        <shortName evidence="6">AtSCI1</shortName>
    </recommendedName>
</protein>
<comment type="function">
    <text evidence="3 4">Component of the auxin signaling transduction pathway that regulates cell proliferation and differentiation during flowers stigmas and styles development (PubMed:25443839). Involved in the regulation of auxin-related genes (PubMed:22301969, PubMed:25443839).</text>
</comment>
<comment type="subcellular location">
    <subcellularLocation>
        <location evidence="4">Nucleus</location>
    </subcellularLocation>
    <text evidence="1">Inside the nucleus, confined to the interchromatic region.</text>
</comment>
<comment type="disruption phenotype">
    <text evidence="4">Increased cell number in upper pistils leading to enhanced stigmatic structure. Impaired siliques formation. Reduced expression of auxin-related genes.</text>
</comment>
<comment type="sequence caution" evidence="7">
    <conflict type="erroneous gene model prediction">
        <sequence resource="EMBL-CDS" id="AAC17063"/>
    </conflict>
</comment>
<reference key="1">
    <citation type="journal article" date="2000" name="Nature">
        <title>Sequence and analysis of chromosome 1 of the plant Arabidopsis thaliana.</title>
        <authorList>
            <person name="Theologis A."/>
            <person name="Ecker J.R."/>
            <person name="Palm C.J."/>
            <person name="Federspiel N.A."/>
            <person name="Kaul S."/>
            <person name="White O."/>
            <person name="Alonso J."/>
            <person name="Altafi H."/>
            <person name="Araujo R."/>
            <person name="Bowman C.L."/>
            <person name="Brooks S.Y."/>
            <person name="Buehler E."/>
            <person name="Chan A."/>
            <person name="Chao Q."/>
            <person name="Chen H."/>
            <person name="Cheuk R.F."/>
            <person name="Chin C.W."/>
            <person name="Chung M.K."/>
            <person name="Conn L."/>
            <person name="Conway A.B."/>
            <person name="Conway A.R."/>
            <person name="Creasy T.H."/>
            <person name="Dewar K."/>
            <person name="Dunn P."/>
            <person name="Etgu P."/>
            <person name="Feldblyum T.V."/>
            <person name="Feng J.-D."/>
            <person name="Fong B."/>
            <person name="Fujii C.Y."/>
            <person name="Gill J.E."/>
            <person name="Goldsmith A.D."/>
            <person name="Haas B."/>
            <person name="Hansen N.F."/>
            <person name="Hughes B."/>
            <person name="Huizar L."/>
            <person name="Hunter J.L."/>
            <person name="Jenkins J."/>
            <person name="Johnson-Hopson C."/>
            <person name="Khan S."/>
            <person name="Khaykin E."/>
            <person name="Kim C.J."/>
            <person name="Koo H.L."/>
            <person name="Kremenetskaia I."/>
            <person name="Kurtz D.B."/>
            <person name="Kwan A."/>
            <person name="Lam B."/>
            <person name="Langin-Hooper S."/>
            <person name="Lee A."/>
            <person name="Lee J.M."/>
            <person name="Lenz C.A."/>
            <person name="Li J.H."/>
            <person name="Li Y.-P."/>
            <person name="Lin X."/>
            <person name="Liu S.X."/>
            <person name="Liu Z.A."/>
            <person name="Luros J.S."/>
            <person name="Maiti R."/>
            <person name="Marziali A."/>
            <person name="Militscher J."/>
            <person name="Miranda M."/>
            <person name="Nguyen M."/>
            <person name="Nierman W.C."/>
            <person name="Osborne B.I."/>
            <person name="Pai G."/>
            <person name="Peterson J."/>
            <person name="Pham P.K."/>
            <person name="Rizzo M."/>
            <person name="Rooney T."/>
            <person name="Rowley D."/>
            <person name="Sakano H."/>
            <person name="Salzberg S.L."/>
            <person name="Schwartz J.R."/>
            <person name="Shinn P."/>
            <person name="Southwick A.M."/>
            <person name="Sun H."/>
            <person name="Tallon L.J."/>
            <person name="Tambunga G."/>
            <person name="Toriumi M.J."/>
            <person name="Town C.D."/>
            <person name="Utterback T."/>
            <person name="Van Aken S."/>
            <person name="Vaysberg M."/>
            <person name="Vysotskaia V.S."/>
            <person name="Walker M."/>
            <person name="Wu D."/>
            <person name="Yu G."/>
            <person name="Fraser C.M."/>
            <person name="Venter J.C."/>
            <person name="Davis R.W."/>
        </authorList>
    </citation>
    <scope>NUCLEOTIDE SEQUENCE [LARGE SCALE GENOMIC DNA]</scope>
    <source>
        <strain>cv. Columbia</strain>
    </source>
</reference>
<reference key="2">
    <citation type="journal article" date="2017" name="Plant J.">
        <title>Araport11: a complete reannotation of the Arabidopsis thaliana reference genome.</title>
        <authorList>
            <person name="Cheng C.Y."/>
            <person name="Krishnakumar V."/>
            <person name="Chan A.P."/>
            <person name="Thibaud-Nissen F."/>
            <person name="Schobel S."/>
            <person name="Town C.D."/>
        </authorList>
    </citation>
    <scope>GENOME REANNOTATION</scope>
    <source>
        <strain>cv. Columbia</strain>
    </source>
</reference>
<reference key="3">
    <citation type="journal article" date="2002" name="Science">
        <title>Functional annotation of a full-length Arabidopsis cDNA collection.</title>
        <authorList>
            <person name="Seki M."/>
            <person name="Narusaka M."/>
            <person name="Kamiya A."/>
            <person name="Ishida J."/>
            <person name="Satou M."/>
            <person name="Sakurai T."/>
            <person name="Nakajima M."/>
            <person name="Enju A."/>
            <person name="Akiyama K."/>
            <person name="Oono Y."/>
            <person name="Muramatsu M."/>
            <person name="Hayashizaki Y."/>
            <person name="Kawai J."/>
            <person name="Carninci P."/>
            <person name="Itoh M."/>
            <person name="Ishii Y."/>
            <person name="Arakawa T."/>
            <person name="Shibata K."/>
            <person name="Shinagawa A."/>
            <person name="Shinozaki K."/>
        </authorList>
    </citation>
    <scope>NUCLEOTIDE SEQUENCE [LARGE SCALE MRNA]</scope>
    <source>
        <strain>cv. Columbia</strain>
    </source>
</reference>
<reference key="4">
    <citation type="journal article" date="2003" name="Science">
        <title>Empirical analysis of transcriptional activity in the Arabidopsis genome.</title>
        <authorList>
            <person name="Yamada K."/>
            <person name="Lim J."/>
            <person name="Dale J.M."/>
            <person name="Chen H."/>
            <person name="Shinn P."/>
            <person name="Palm C.J."/>
            <person name="Southwick A.M."/>
            <person name="Wu H.C."/>
            <person name="Kim C.J."/>
            <person name="Nguyen M."/>
            <person name="Pham P.K."/>
            <person name="Cheuk R.F."/>
            <person name="Karlin-Newmann G."/>
            <person name="Liu S.X."/>
            <person name="Lam B."/>
            <person name="Sakano H."/>
            <person name="Wu T."/>
            <person name="Yu G."/>
            <person name="Miranda M."/>
            <person name="Quach H.L."/>
            <person name="Tripp M."/>
            <person name="Chang C.H."/>
            <person name="Lee J.M."/>
            <person name="Toriumi M.J."/>
            <person name="Chan M.M."/>
            <person name="Tang C.C."/>
            <person name="Onodera C.S."/>
            <person name="Deng J.M."/>
            <person name="Akiyama K."/>
            <person name="Ansari Y."/>
            <person name="Arakawa T."/>
            <person name="Banh J."/>
            <person name="Banno F."/>
            <person name="Bowser L."/>
            <person name="Brooks S.Y."/>
            <person name="Carninci P."/>
            <person name="Chao Q."/>
            <person name="Choy N."/>
            <person name="Enju A."/>
            <person name="Goldsmith A.D."/>
            <person name="Gurjal M."/>
            <person name="Hansen N.F."/>
            <person name="Hayashizaki Y."/>
            <person name="Johnson-Hopson C."/>
            <person name="Hsuan V.W."/>
            <person name="Iida K."/>
            <person name="Karnes M."/>
            <person name="Khan S."/>
            <person name="Koesema E."/>
            <person name="Ishida J."/>
            <person name="Jiang P.X."/>
            <person name="Jones T."/>
            <person name="Kawai J."/>
            <person name="Kamiya A."/>
            <person name="Meyers C."/>
            <person name="Nakajima M."/>
            <person name="Narusaka M."/>
            <person name="Seki M."/>
            <person name="Sakurai T."/>
            <person name="Satou M."/>
            <person name="Tamse R."/>
            <person name="Vaysberg M."/>
            <person name="Wallender E.K."/>
            <person name="Wong C."/>
            <person name="Yamamura Y."/>
            <person name="Yuan S."/>
            <person name="Shinozaki K."/>
            <person name="Davis R.W."/>
            <person name="Theologis A."/>
            <person name="Ecker J.R."/>
        </authorList>
    </citation>
    <scope>NUCLEOTIDE SEQUENCE [LARGE SCALE MRNA]</scope>
    <source>
        <strain>cv. Columbia</strain>
    </source>
</reference>
<reference key="5">
    <citation type="submission" date="2002-03" db="EMBL/GenBank/DDBJ databases">
        <title>Full-length cDNA from Arabidopsis thaliana.</title>
        <authorList>
            <person name="Brover V.V."/>
            <person name="Troukhan M.E."/>
            <person name="Alexandrov N.A."/>
            <person name="Lu Y.-P."/>
            <person name="Flavell R.B."/>
            <person name="Feldmann K.A."/>
        </authorList>
    </citation>
    <scope>NUCLEOTIDE SEQUENCE [LARGE SCALE MRNA]</scope>
</reference>
<reference key="6">
    <citation type="journal article" date="2012" name="Plant Signal. Behav.">
        <title>SCI1, the first member of the tissue-specific inhibitors of CDK (TIC) class, is probably connected to the auxin signaling pathway.</title>
        <authorList>
            <person name="DePaoli H.C."/>
            <person name="Goldman G.H."/>
            <person name="Goldman M.-H.S."/>
        </authorList>
    </citation>
    <scope>FUNCTION</scope>
</reference>
<reference key="7">
    <citation type="journal article" date="2014" name="Plant Sci.">
        <title>SCI1 is a component of the auxin-dependent control of cell proliferation in Arabidopsis upper pistil.</title>
        <authorList>
            <person name="DePaoli H.C."/>
            <person name="Dornelas M.C."/>
            <person name="Goldman M.H.S."/>
        </authorList>
    </citation>
    <scope>FUNCTION</scope>
    <scope>DISRUPTION PHENOTYPE</scope>
    <scope>SUBCELLULAR LOCATION</scope>
    <source>
        <strain>cv. Columbia</strain>
    </source>
</reference>
<organism>
    <name type="scientific">Arabidopsis thaliana</name>
    <name type="common">Mouse-ear cress</name>
    <dbReference type="NCBI Taxonomy" id="3702"/>
    <lineage>
        <taxon>Eukaryota</taxon>
        <taxon>Viridiplantae</taxon>
        <taxon>Streptophyta</taxon>
        <taxon>Embryophyta</taxon>
        <taxon>Tracheophyta</taxon>
        <taxon>Spermatophyta</taxon>
        <taxon>Magnoliopsida</taxon>
        <taxon>eudicotyledons</taxon>
        <taxon>Gunneridae</taxon>
        <taxon>Pentapetalae</taxon>
        <taxon>rosids</taxon>
        <taxon>malvids</taxon>
        <taxon>Brassicales</taxon>
        <taxon>Brassicaceae</taxon>
        <taxon>Camelineae</taxon>
        <taxon>Arabidopsis</taxon>
    </lineage>
</organism>